<organism>
    <name type="scientific">Antheopsis maculata</name>
    <name type="common">Sea anemone</name>
    <dbReference type="NCBI Taxonomy" id="280228"/>
    <lineage>
        <taxon>Eukaryota</taxon>
        <taxon>Metazoa</taxon>
        <taxon>Cnidaria</taxon>
        <taxon>Anthozoa</taxon>
        <taxon>Hexacorallia</taxon>
        <taxon>Actiniaria</taxon>
        <taxon>Actiniidae</taxon>
        <taxon>Antheopsis</taxon>
    </lineage>
</organism>
<evidence type="ECO:0000250" key="1">
    <source>
        <dbReference type="UniProtKB" id="P0C280"/>
    </source>
</evidence>
<evidence type="ECO:0000255" key="2"/>
<evidence type="ECO:0000269" key="3">
    <source>
    </source>
</evidence>
<evidence type="ECO:0000303" key="4">
    <source>
    </source>
</evidence>
<evidence type="ECO:0000303" key="5">
    <source>
    </source>
</evidence>
<evidence type="ECO:0000305" key="6"/>
<feature type="signal peptide" evidence="2">
    <location>
        <begin position="1"/>
        <end position="19"/>
    </location>
</feature>
<feature type="propeptide" id="PRO_0000034823" evidence="3">
    <location>
        <begin position="20"/>
        <end position="24"/>
    </location>
</feature>
<feature type="peptide" id="PRO_0000034824" description="Delta-actitoxin-Amc3a" evidence="3">
    <location>
        <begin position="27"/>
        <end position="73"/>
    </location>
</feature>
<feature type="modified residue" description="Hydroxyproline" evidence="3">
    <location>
        <position position="29"/>
    </location>
</feature>
<feature type="modified residue" description="Glutamine amide" evidence="2">
    <location>
        <position position="73"/>
    </location>
</feature>
<feature type="disulfide bond" evidence="1">
    <location>
        <begin position="30"/>
        <end position="70"/>
    </location>
</feature>
<feature type="disulfide bond" evidence="1">
    <location>
        <begin position="32"/>
        <end position="60"/>
    </location>
</feature>
<feature type="disulfide bond" evidence="1">
    <location>
        <begin position="53"/>
        <end position="71"/>
    </location>
</feature>
<name>NA13_ANTMC</name>
<protein>
    <recommendedName>
        <fullName evidence="5">Delta-actitoxin-Amc3a</fullName>
        <shortName evidence="5">Delta-AITX-Amc3a</shortName>
    </recommendedName>
    <alternativeName>
        <fullName evidence="4">Peptide toxin Am III</fullName>
    </alternativeName>
    <alternativeName>
        <fullName evidence="6">Peptide toxin Am-3</fullName>
    </alternativeName>
</protein>
<reference key="1">
    <citation type="journal article" date="2005" name="Toxicon">
        <title>Isolation and molecular cloning of novel peptide toxins from the sea anemone Antheopsis maculata.</title>
        <authorList>
            <person name="Honma T."/>
            <person name="Hasegawa Y."/>
            <person name="Ishida M."/>
            <person name="Nagai H."/>
            <person name="Nagashima Y."/>
            <person name="Shiomi K."/>
        </authorList>
    </citation>
    <scope>NUCLEOTIDE SEQUENCE [MRNA]</scope>
    <scope>MASS SPECTROMETRY</scope>
    <scope>HYDROXYLATION AT PRO-29</scope>
    <scope>TOXIC DOSE</scope>
</reference>
<reference key="2">
    <citation type="journal article" date="2012" name="Toxicon">
        <title>Development of a rational nomenclature for naming peptide and protein toxins from sea anemones.</title>
        <authorList>
            <person name="Oliveira J.S."/>
            <person name="Fuentes-Silva D."/>
            <person name="King G.F."/>
        </authorList>
    </citation>
    <scope>NOMENCLATURE</scope>
</reference>
<dbReference type="EMBL" id="AB180687">
    <property type="protein sequence ID" value="BAD74023.1"/>
    <property type="molecule type" value="mRNA"/>
</dbReference>
<dbReference type="SMR" id="P69928"/>
<dbReference type="TCDB" id="8.B.17.1.2">
    <property type="family name" value="the sea anemone peptide toxin class iii (shi) family"/>
</dbReference>
<dbReference type="GO" id="GO:0005576">
    <property type="term" value="C:extracellular region"/>
    <property type="evidence" value="ECO:0007669"/>
    <property type="project" value="UniProtKB-SubCell"/>
</dbReference>
<dbReference type="GO" id="GO:0042151">
    <property type="term" value="C:nematocyst"/>
    <property type="evidence" value="ECO:0007669"/>
    <property type="project" value="UniProtKB-SubCell"/>
</dbReference>
<dbReference type="GO" id="GO:0017080">
    <property type="term" value="F:sodium channel regulator activity"/>
    <property type="evidence" value="ECO:0007669"/>
    <property type="project" value="UniProtKB-KW"/>
</dbReference>
<dbReference type="GO" id="GO:0090729">
    <property type="term" value="F:toxin activity"/>
    <property type="evidence" value="ECO:0007669"/>
    <property type="project" value="UniProtKB-KW"/>
</dbReference>
<dbReference type="Gene3D" id="2.20.20.10">
    <property type="entry name" value="Anthopleurin-A"/>
    <property type="match status" value="1"/>
</dbReference>
<dbReference type="InterPro" id="IPR023355">
    <property type="entry name" value="Myo_ane_neurotoxin_sf"/>
</dbReference>
<dbReference type="Pfam" id="PF00706">
    <property type="entry name" value="Toxin_4"/>
    <property type="match status" value="1"/>
</dbReference>
<dbReference type="SUPFAM" id="SSF57392">
    <property type="entry name" value="Defensin-like"/>
    <property type="match status" value="1"/>
</dbReference>
<accession>P69928</accession>
<accession>Q5R213</accession>
<keyword id="KW-0027">Amidation</keyword>
<keyword id="KW-0165">Cleavage on pair of basic residues</keyword>
<keyword id="KW-1015">Disulfide bond</keyword>
<keyword id="KW-0379">Hydroxylation</keyword>
<keyword id="KW-0872">Ion channel impairing toxin</keyword>
<keyword id="KW-0166">Nematocyst</keyword>
<keyword id="KW-0528">Neurotoxin</keyword>
<keyword id="KW-0964">Secreted</keyword>
<keyword id="KW-0732">Signal</keyword>
<keyword id="KW-0800">Toxin</keyword>
<keyword id="KW-0738">Voltage-gated sodium channel impairing toxin</keyword>
<sequence>MNRLIILVVAAVFLGMASAEEDVLKRGFPCRCDSDGPSVHGNPLSGTIWVTSCATGWHKCNSENELFHECCKQG</sequence>
<proteinExistence type="evidence at protein level"/>
<comment type="function">
    <text evidence="1">Inhibits voltage-gated sodium channels (Nav).</text>
</comment>
<comment type="subcellular location">
    <subcellularLocation>
        <location evidence="6">Secreted</location>
    </subcellularLocation>
    <subcellularLocation>
        <location evidence="6">Nematocyst</location>
    </subcellularLocation>
</comment>
<comment type="mass spectrometry"/>
<comment type="toxic dose">
    <text evidence="3">LD(50) is 70 ug/kg into crabs.</text>
</comment>
<comment type="similarity">
    <text evidence="6">Belongs to the sea anemone sodium channel inhibitory toxin family. Type I subfamily.</text>
</comment>